<feature type="chain" id="PRO_0000113850" description="Protein GrpE">
    <location>
        <begin position="1"/>
        <end position="196"/>
    </location>
</feature>
<feature type="region of interest" description="Disordered" evidence="2">
    <location>
        <begin position="1"/>
        <end position="40"/>
    </location>
</feature>
<accession>Q8XEY8</accession>
<accession>Q7AMG8</accession>
<name>GRPE_SALTI</name>
<evidence type="ECO:0000255" key="1">
    <source>
        <dbReference type="HAMAP-Rule" id="MF_01151"/>
    </source>
</evidence>
<evidence type="ECO:0000256" key="2">
    <source>
        <dbReference type="SAM" id="MobiDB-lite"/>
    </source>
</evidence>
<keyword id="KW-0143">Chaperone</keyword>
<keyword id="KW-0963">Cytoplasm</keyword>
<keyword id="KW-0346">Stress response</keyword>
<dbReference type="EMBL" id="AE014613">
    <property type="protein sequence ID" value="AAO70207.1"/>
    <property type="molecule type" value="Genomic_DNA"/>
</dbReference>
<dbReference type="EMBL" id="AL513382">
    <property type="protein sequence ID" value="CAD05860.1"/>
    <property type="molecule type" value="Genomic_DNA"/>
</dbReference>
<dbReference type="RefSeq" id="NP_457151.1">
    <property type="nucleotide sequence ID" value="NC_003198.1"/>
</dbReference>
<dbReference type="RefSeq" id="WP_001518875.1">
    <property type="nucleotide sequence ID" value="NZ_WSUR01000036.1"/>
</dbReference>
<dbReference type="SMR" id="Q8XEY8"/>
<dbReference type="STRING" id="220341.gene:17586764"/>
<dbReference type="KEGG" id="stt:t2636"/>
<dbReference type="KEGG" id="sty:STY2868"/>
<dbReference type="PATRIC" id="fig|220341.7.peg.2918"/>
<dbReference type="eggNOG" id="COG0576">
    <property type="taxonomic scope" value="Bacteria"/>
</dbReference>
<dbReference type="HOGENOM" id="CLU_057217_6_0_6"/>
<dbReference type="OMA" id="PHRHQAI"/>
<dbReference type="OrthoDB" id="9789811at2"/>
<dbReference type="Proteomes" id="UP000000541">
    <property type="component" value="Chromosome"/>
</dbReference>
<dbReference type="Proteomes" id="UP000002670">
    <property type="component" value="Chromosome"/>
</dbReference>
<dbReference type="GO" id="GO:0005829">
    <property type="term" value="C:cytosol"/>
    <property type="evidence" value="ECO:0007669"/>
    <property type="project" value="TreeGrafter"/>
</dbReference>
<dbReference type="GO" id="GO:0000774">
    <property type="term" value="F:adenyl-nucleotide exchange factor activity"/>
    <property type="evidence" value="ECO:0007669"/>
    <property type="project" value="InterPro"/>
</dbReference>
<dbReference type="GO" id="GO:0042803">
    <property type="term" value="F:protein homodimerization activity"/>
    <property type="evidence" value="ECO:0007669"/>
    <property type="project" value="InterPro"/>
</dbReference>
<dbReference type="GO" id="GO:0051087">
    <property type="term" value="F:protein-folding chaperone binding"/>
    <property type="evidence" value="ECO:0007669"/>
    <property type="project" value="InterPro"/>
</dbReference>
<dbReference type="GO" id="GO:0051082">
    <property type="term" value="F:unfolded protein binding"/>
    <property type="evidence" value="ECO:0007669"/>
    <property type="project" value="TreeGrafter"/>
</dbReference>
<dbReference type="GO" id="GO:0006457">
    <property type="term" value="P:protein folding"/>
    <property type="evidence" value="ECO:0007669"/>
    <property type="project" value="InterPro"/>
</dbReference>
<dbReference type="CDD" id="cd00446">
    <property type="entry name" value="GrpE"/>
    <property type="match status" value="1"/>
</dbReference>
<dbReference type="FunFam" id="2.30.22.10:FF:000001">
    <property type="entry name" value="Protein GrpE"/>
    <property type="match status" value="1"/>
</dbReference>
<dbReference type="FunFam" id="3.90.20.20:FF:000001">
    <property type="entry name" value="Protein GrpE"/>
    <property type="match status" value="1"/>
</dbReference>
<dbReference type="Gene3D" id="3.90.20.20">
    <property type="match status" value="1"/>
</dbReference>
<dbReference type="Gene3D" id="2.30.22.10">
    <property type="entry name" value="Head domain of nucleotide exchange factor GrpE"/>
    <property type="match status" value="1"/>
</dbReference>
<dbReference type="HAMAP" id="MF_01151">
    <property type="entry name" value="GrpE"/>
    <property type="match status" value="1"/>
</dbReference>
<dbReference type="InterPro" id="IPR000740">
    <property type="entry name" value="GrpE"/>
</dbReference>
<dbReference type="InterPro" id="IPR013805">
    <property type="entry name" value="GrpE_coiled_coil"/>
</dbReference>
<dbReference type="InterPro" id="IPR009012">
    <property type="entry name" value="GrpE_head"/>
</dbReference>
<dbReference type="NCBIfam" id="NF007655">
    <property type="entry name" value="PRK10325.1"/>
    <property type="match status" value="1"/>
</dbReference>
<dbReference type="NCBIfam" id="NF010738">
    <property type="entry name" value="PRK14140.1"/>
    <property type="match status" value="1"/>
</dbReference>
<dbReference type="NCBIfam" id="NF010748">
    <property type="entry name" value="PRK14150.1"/>
    <property type="match status" value="1"/>
</dbReference>
<dbReference type="PANTHER" id="PTHR21237">
    <property type="entry name" value="GRPE PROTEIN"/>
    <property type="match status" value="1"/>
</dbReference>
<dbReference type="PANTHER" id="PTHR21237:SF23">
    <property type="entry name" value="GRPE PROTEIN HOMOLOG, MITOCHONDRIAL"/>
    <property type="match status" value="1"/>
</dbReference>
<dbReference type="Pfam" id="PF01025">
    <property type="entry name" value="GrpE"/>
    <property type="match status" value="1"/>
</dbReference>
<dbReference type="PRINTS" id="PR00773">
    <property type="entry name" value="GRPEPROTEIN"/>
</dbReference>
<dbReference type="SUPFAM" id="SSF58014">
    <property type="entry name" value="Coiled-coil domain of nucleotide exchange factor GrpE"/>
    <property type="match status" value="1"/>
</dbReference>
<dbReference type="SUPFAM" id="SSF51064">
    <property type="entry name" value="Head domain of nucleotide exchange factor GrpE"/>
    <property type="match status" value="1"/>
</dbReference>
<dbReference type="PROSITE" id="PS01071">
    <property type="entry name" value="GRPE"/>
    <property type="match status" value="1"/>
</dbReference>
<reference key="1">
    <citation type="journal article" date="2003" name="J. Bacteriol.">
        <title>Comparative genomics of Salmonella enterica serovar Typhi strains Ty2 and CT18.</title>
        <authorList>
            <person name="Deng W."/>
            <person name="Liou S.-R."/>
            <person name="Plunkett G. III"/>
            <person name="Mayhew G.F."/>
            <person name="Rose D.J."/>
            <person name="Burland V."/>
            <person name="Kodoyianni V."/>
            <person name="Schwartz D.C."/>
            <person name="Blattner F.R."/>
        </authorList>
    </citation>
    <scope>NUCLEOTIDE SEQUENCE [LARGE SCALE GENOMIC DNA]</scope>
    <source>
        <strain>ATCC 700931 / Ty2</strain>
    </source>
</reference>
<reference key="2">
    <citation type="journal article" date="2001" name="Nature">
        <title>Complete genome sequence of a multiple drug resistant Salmonella enterica serovar Typhi CT18.</title>
        <authorList>
            <person name="Parkhill J."/>
            <person name="Dougan G."/>
            <person name="James K.D."/>
            <person name="Thomson N.R."/>
            <person name="Pickard D."/>
            <person name="Wain J."/>
            <person name="Churcher C.M."/>
            <person name="Mungall K.L."/>
            <person name="Bentley S.D."/>
            <person name="Holden M.T.G."/>
            <person name="Sebaihia M."/>
            <person name="Baker S."/>
            <person name="Basham D."/>
            <person name="Brooks K."/>
            <person name="Chillingworth T."/>
            <person name="Connerton P."/>
            <person name="Cronin A."/>
            <person name="Davis P."/>
            <person name="Davies R.M."/>
            <person name="Dowd L."/>
            <person name="White N."/>
            <person name="Farrar J."/>
            <person name="Feltwell T."/>
            <person name="Hamlin N."/>
            <person name="Haque A."/>
            <person name="Hien T.T."/>
            <person name="Holroyd S."/>
            <person name="Jagels K."/>
            <person name="Krogh A."/>
            <person name="Larsen T.S."/>
            <person name="Leather S."/>
            <person name="Moule S."/>
            <person name="O'Gaora P."/>
            <person name="Parry C."/>
            <person name="Quail M.A."/>
            <person name="Rutherford K.M."/>
            <person name="Simmonds M."/>
            <person name="Skelton J."/>
            <person name="Stevens K."/>
            <person name="Whitehead S."/>
            <person name="Barrell B.G."/>
        </authorList>
    </citation>
    <scope>NUCLEOTIDE SEQUENCE [LARGE SCALE GENOMIC DNA]</scope>
    <source>
        <strain>CT18</strain>
    </source>
</reference>
<organism>
    <name type="scientific">Salmonella typhi</name>
    <dbReference type="NCBI Taxonomy" id="90370"/>
    <lineage>
        <taxon>Bacteria</taxon>
        <taxon>Pseudomonadati</taxon>
        <taxon>Pseudomonadota</taxon>
        <taxon>Gammaproteobacteria</taxon>
        <taxon>Enterobacterales</taxon>
        <taxon>Enterobacteriaceae</taxon>
        <taxon>Salmonella</taxon>
    </lineage>
</organism>
<comment type="function">
    <text evidence="1">Participates actively in the response to hyperosmotic and heat shock by preventing the aggregation of stress-denatured proteins, in association with DnaK and GrpE. It is the nucleotide exchange factor for DnaK and may function as a thermosensor. Unfolded proteins bind initially to DnaJ; upon interaction with the DnaJ-bound protein, DnaK hydrolyzes its bound ATP, resulting in the formation of a stable complex. GrpE releases ADP from DnaK; ATP binding to DnaK triggers the release of the substrate protein, thus completing the reaction cycle. Several rounds of ATP-dependent interactions between DnaJ, DnaK and GrpE are required for fully efficient folding.</text>
</comment>
<comment type="subunit">
    <text evidence="1">Homodimer.</text>
</comment>
<comment type="subcellular location">
    <subcellularLocation>
        <location evidence="1">Cytoplasm</location>
    </subcellularLocation>
</comment>
<comment type="similarity">
    <text evidence="1">Belongs to the GrpE family.</text>
</comment>
<proteinExistence type="inferred from homology"/>
<sequence length="196" mass="21841">MSSKEQKTPEGQAPEEIIMDQHEEVEAVEPNDSAEQVDPRDEKIANLEVQLAEAQTRERDTVLRIKAEMENLRRRTEQDIEKAHKFALEKFVNELLPVIDSLDRALEVADKANPDMAAMVEGIELTLKSMLDVVRKFGVEVIAETNVPLDPNVHQAIAMVESEEVPAGNVLGIMQKGYTLNGRTIRAAMVTVAKAK</sequence>
<gene>
    <name evidence="1" type="primary">grpE</name>
    <name type="ordered locus">STY2868</name>
    <name type="ordered locus">t2636</name>
</gene>
<protein>
    <recommendedName>
        <fullName evidence="1">Protein GrpE</fullName>
    </recommendedName>
    <alternativeName>
        <fullName evidence="1">HSP-70 cofactor</fullName>
    </alternativeName>
</protein>